<feature type="transit peptide" description="Apicoplast" evidence="5">
    <location>
        <begin position="1"/>
        <end status="unknown"/>
    </location>
</feature>
<feature type="chain" id="PRO_0000452697" description="4-hydroxy-3-methylbut-2-enyl diphosphate reductase, apicoplast">
    <location>
        <begin status="unknown"/>
        <end position="535"/>
    </location>
</feature>
<feature type="active site" description="Proton donor" evidence="1">
    <location>
        <position position="345"/>
    </location>
</feature>
<feature type="binding site" evidence="3 10">
    <location>
        <position position="231"/>
    </location>
    <ligand>
        <name>[4Fe-4S] cluster</name>
        <dbReference type="ChEBI" id="CHEBI:49883"/>
    </ligand>
</feature>
<feature type="binding site" evidence="1">
    <location>
        <position position="260"/>
    </location>
    <ligand>
        <name>(2E)-4-hydroxy-3-methylbut-2-enyl diphosphate</name>
        <dbReference type="ChEBI" id="CHEBI:128753"/>
    </ligand>
</feature>
<feature type="binding site" evidence="1">
    <location>
        <position position="260"/>
    </location>
    <ligand>
        <name>dimethylallyl diphosphate</name>
        <dbReference type="ChEBI" id="CHEBI:57623"/>
    </ligand>
</feature>
<feature type="binding site" evidence="1">
    <location>
        <position position="260"/>
    </location>
    <ligand>
        <name>isopentenyl diphosphate</name>
        <dbReference type="ChEBI" id="CHEBI:128769"/>
    </ligand>
</feature>
<feature type="binding site" evidence="1">
    <location>
        <position position="293"/>
    </location>
    <ligand>
        <name>(2E)-4-hydroxy-3-methylbut-2-enyl diphosphate</name>
        <dbReference type="ChEBI" id="CHEBI:128753"/>
    </ligand>
</feature>
<feature type="binding site" evidence="1">
    <location>
        <position position="293"/>
    </location>
    <ligand>
        <name>dimethylallyl diphosphate</name>
        <dbReference type="ChEBI" id="CHEBI:57623"/>
    </ligand>
</feature>
<feature type="binding site" evidence="1">
    <location>
        <position position="293"/>
    </location>
    <ligand>
        <name>isopentenyl diphosphate</name>
        <dbReference type="ChEBI" id="CHEBI:128769"/>
    </ligand>
</feature>
<feature type="binding site" evidence="3 10">
    <location>
        <position position="315"/>
    </location>
    <ligand>
        <name>[4Fe-4S] cluster</name>
        <dbReference type="ChEBI" id="CHEBI:49883"/>
    </ligand>
</feature>
<feature type="binding site" evidence="1">
    <location>
        <position position="343"/>
    </location>
    <ligand>
        <name>(2E)-4-hydroxy-3-methylbut-2-enyl diphosphate</name>
        <dbReference type="ChEBI" id="CHEBI:128753"/>
    </ligand>
</feature>
<feature type="binding site" evidence="1">
    <location>
        <position position="343"/>
    </location>
    <ligand>
        <name>dimethylallyl diphosphate</name>
        <dbReference type="ChEBI" id="CHEBI:57623"/>
    </ligand>
</feature>
<feature type="binding site" evidence="1">
    <location>
        <position position="343"/>
    </location>
    <ligand>
        <name>isopentenyl diphosphate</name>
        <dbReference type="ChEBI" id="CHEBI:128769"/>
    </ligand>
</feature>
<feature type="binding site" evidence="1">
    <location>
        <position position="383"/>
    </location>
    <ligand>
        <name>(2E)-4-hydroxy-3-methylbut-2-enyl diphosphate</name>
        <dbReference type="ChEBI" id="CHEBI:128753"/>
    </ligand>
</feature>
<feature type="binding site" evidence="3 10">
    <location>
        <position position="413"/>
    </location>
    <ligand>
        <name>[4Fe-4S] cluster</name>
        <dbReference type="ChEBI" id="CHEBI:49883"/>
    </ligand>
</feature>
<feature type="binding site" evidence="1">
    <location>
        <position position="441"/>
    </location>
    <ligand>
        <name>(2E)-4-hydroxy-3-methylbut-2-enyl diphosphate</name>
        <dbReference type="ChEBI" id="CHEBI:128753"/>
    </ligand>
</feature>
<feature type="binding site" evidence="1">
    <location>
        <position position="441"/>
    </location>
    <ligand>
        <name>dimethylallyl diphosphate</name>
        <dbReference type="ChEBI" id="CHEBI:57623"/>
    </ligand>
</feature>
<feature type="binding site" evidence="1">
    <location>
        <position position="441"/>
    </location>
    <ligand>
        <name>isopentenyl diphosphate</name>
        <dbReference type="ChEBI" id="CHEBI:128769"/>
    </ligand>
</feature>
<feature type="binding site" evidence="1">
    <location>
        <position position="442"/>
    </location>
    <ligand>
        <name>(2E)-4-hydroxy-3-methylbut-2-enyl diphosphate</name>
        <dbReference type="ChEBI" id="CHEBI:128753"/>
    </ligand>
</feature>
<feature type="binding site" evidence="1">
    <location>
        <position position="442"/>
    </location>
    <ligand>
        <name>dimethylallyl diphosphate</name>
        <dbReference type="ChEBI" id="CHEBI:57623"/>
    </ligand>
</feature>
<feature type="binding site" evidence="1">
    <location>
        <position position="442"/>
    </location>
    <ligand>
        <name>isopentenyl diphosphate</name>
        <dbReference type="ChEBI" id="CHEBI:128769"/>
    </ligand>
</feature>
<feature type="binding site" evidence="1">
    <location>
        <position position="443"/>
    </location>
    <ligand>
        <name>(2E)-4-hydroxy-3-methylbut-2-enyl diphosphate</name>
        <dbReference type="ChEBI" id="CHEBI:128753"/>
    </ligand>
</feature>
<feature type="binding site" evidence="1">
    <location>
        <position position="443"/>
    </location>
    <ligand>
        <name>dimethylallyl diphosphate</name>
        <dbReference type="ChEBI" id="CHEBI:57623"/>
    </ligand>
</feature>
<feature type="binding site" evidence="1">
    <location>
        <position position="443"/>
    </location>
    <ligand>
        <name>isopentenyl diphosphate</name>
        <dbReference type="ChEBI" id="CHEBI:128769"/>
    </ligand>
</feature>
<feature type="binding site" evidence="1">
    <location>
        <position position="485"/>
    </location>
    <ligand>
        <name>(2E)-4-hydroxy-3-methylbut-2-enyl diphosphate</name>
        <dbReference type="ChEBI" id="CHEBI:128753"/>
    </ligand>
</feature>
<feature type="binding site" evidence="1">
    <location>
        <position position="485"/>
    </location>
    <ligand>
        <name>dimethylallyl diphosphate</name>
        <dbReference type="ChEBI" id="CHEBI:57623"/>
    </ligand>
</feature>
<feature type="binding site" evidence="1">
    <location>
        <position position="485"/>
    </location>
    <ligand>
        <name>isopentenyl diphosphate</name>
        <dbReference type="ChEBI" id="CHEBI:128769"/>
    </ligand>
</feature>
<feature type="sequence conflict" description="In Ref. 1; AAK12102." evidence="5" ref="1">
    <original>L</original>
    <variation>F</variation>
    <location>
        <position position="526"/>
    </location>
</feature>
<feature type="strand" evidence="11">
    <location>
        <begin position="221"/>
        <end position="227"/>
    </location>
</feature>
<feature type="helix" evidence="11">
    <location>
        <begin position="232"/>
        <end position="247"/>
    </location>
</feature>
<feature type="strand" evidence="11">
    <location>
        <begin position="252"/>
        <end position="256"/>
    </location>
</feature>
<feature type="strand" evidence="11">
    <location>
        <begin position="258"/>
        <end position="260"/>
    </location>
</feature>
<feature type="helix" evidence="11">
    <location>
        <begin position="262"/>
        <end position="271"/>
    </location>
</feature>
<feature type="strand" evidence="11">
    <location>
        <begin position="273"/>
        <end position="277"/>
    </location>
</feature>
<feature type="helix" evidence="11">
    <location>
        <begin position="279"/>
        <end position="281"/>
    </location>
</feature>
<feature type="strand" evidence="11">
    <location>
        <begin position="286"/>
        <end position="290"/>
    </location>
</feature>
<feature type="helix" evidence="11">
    <location>
        <begin position="297"/>
        <end position="305"/>
    </location>
</feature>
<feature type="strand" evidence="11">
    <location>
        <begin position="309"/>
        <end position="312"/>
    </location>
</feature>
<feature type="helix" evidence="11">
    <location>
        <begin position="316"/>
        <end position="329"/>
    </location>
</feature>
<feature type="turn" evidence="11">
    <location>
        <begin position="330"/>
        <end position="332"/>
    </location>
</feature>
<feature type="strand" evidence="11">
    <location>
        <begin position="334"/>
        <end position="339"/>
    </location>
</feature>
<feature type="helix" evidence="11">
    <location>
        <begin position="344"/>
        <end position="350"/>
    </location>
</feature>
<feature type="helix" evidence="11">
    <location>
        <begin position="354"/>
        <end position="356"/>
    </location>
</feature>
<feature type="strand" evidence="11">
    <location>
        <begin position="357"/>
        <end position="362"/>
    </location>
</feature>
<feature type="helix" evidence="11">
    <location>
        <begin position="363"/>
        <end position="368"/>
    </location>
</feature>
<feature type="strand" evidence="11">
    <location>
        <begin position="377"/>
        <end position="381"/>
    </location>
</feature>
<feature type="helix" evidence="11">
    <location>
        <begin position="387"/>
        <end position="400"/>
    </location>
</feature>
<feature type="helix" evidence="11">
    <location>
        <begin position="414"/>
        <end position="427"/>
    </location>
</feature>
<feature type="strand" evidence="11">
    <location>
        <begin position="431"/>
        <end position="437"/>
    </location>
</feature>
<feature type="helix" evidence="11">
    <location>
        <begin position="442"/>
        <end position="452"/>
    </location>
</feature>
<feature type="turn" evidence="11">
    <location>
        <begin position="453"/>
        <end position="455"/>
    </location>
</feature>
<feature type="strand" evidence="11">
    <location>
        <begin position="458"/>
        <end position="463"/>
    </location>
</feature>
<feature type="helix" evidence="11">
    <location>
        <begin position="464"/>
        <end position="466"/>
    </location>
</feature>
<feature type="helix" evidence="11">
    <location>
        <begin position="469"/>
        <end position="472"/>
    </location>
</feature>
<feature type="strand" evidence="11">
    <location>
        <begin position="477"/>
        <end position="482"/>
    </location>
</feature>
<feature type="helix" evidence="11">
    <location>
        <begin position="488"/>
        <end position="499"/>
    </location>
</feature>
<feature type="turn" evidence="11">
    <location>
        <begin position="501"/>
        <end position="503"/>
    </location>
</feature>
<feature type="strand" evidence="11">
    <location>
        <begin position="506"/>
        <end position="511"/>
    </location>
</feature>
<feature type="helix" evidence="11">
    <location>
        <begin position="524"/>
        <end position="533"/>
    </location>
</feature>
<evidence type="ECO:0000250" key="1">
    <source>
        <dbReference type="UniProtKB" id="P62623"/>
    </source>
</evidence>
<evidence type="ECO:0000269" key="2">
    <source>
    </source>
</evidence>
<evidence type="ECO:0000269" key="3">
    <source>
    </source>
</evidence>
<evidence type="ECO:0000303" key="4">
    <source>
    </source>
</evidence>
<evidence type="ECO:0000305" key="5"/>
<evidence type="ECO:0000305" key="6">
    <source>
    </source>
</evidence>
<evidence type="ECO:0000312" key="7">
    <source>
        <dbReference type="EMBL" id="AAK12102.1"/>
    </source>
</evidence>
<evidence type="ECO:0000312" key="8">
    <source>
        <dbReference type="EMBL" id="CAD49005.1"/>
    </source>
</evidence>
<evidence type="ECO:0000312" key="9">
    <source>
        <dbReference type="Proteomes" id="UP000001450"/>
    </source>
</evidence>
<evidence type="ECO:0007744" key="10">
    <source>
        <dbReference type="PDB" id="4N7B"/>
    </source>
</evidence>
<evidence type="ECO:0007829" key="11">
    <source>
        <dbReference type="PDB" id="4N7B"/>
    </source>
</evidence>
<reference evidence="7" key="1">
    <citation type="journal article" date="2001" name="J. Bacteriol.">
        <title>GcpE is involved in the 2-C-methyl-D-erythritol 4-phosphate pathway of isoprenoid biosynthesis in Escherichia coli.</title>
        <authorList>
            <person name="Altincicek B."/>
            <person name="Kollas A.-K."/>
            <person name="Sanderbrand S."/>
            <person name="Wiesner J."/>
            <person name="Hintz M."/>
            <person name="Beck E."/>
            <person name="Jomaa H."/>
        </authorList>
    </citation>
    <scope>NUCLEOTIDE SEQUENCE [GENOMIC DNA]</scope>
</reference>
<reference evidence="9" key="2">
    <citation type="journal article" date="2002" name="Nature">
        <title>Genome sequence of the human malaria parasite Plasmodium falciparum.</title>
        <authorList>
            <person name="Gardner M.J."/>
            <person name="Hall N."/>
            <person name="Fung E."/>
            <person name="White O."/>
            <person name="Berriman M."/>
            <person name="Hyman R.W."/>
            <person name="Carlton J.M."/>
            <person name="Pain A."/>
            <person name="Nelson K.E."/>
            <person name="Bowman S."/>
            <person name="Paulsen I.T."/>
            <person name="James K.D."/>
            <person name="Eisen J.A."/>
            <person name="Rutherford K.M."/>
            <person name="Salzberg S.L."/>
            <person name="Craig A."/>
            <person name="Kyes S."/>
            <person name="Chan M.-S."/>
            <person name="Nene V."/>
            <person name="Shallom S.J."/>
            <person name="Suh B."/>
            <person name="Peterson J."/>
            <person name="Angiuoli S."/>
            <person name="Pertea M."/>
            <person name="Allen J."/>
            <person name="Selengut J."/>
            <person name="Haft D."/>
            <person name="Mather M.W."/>
            <person name="Vaidya A.B."/>
            <person name="Martin D.M.A."/>
            <person name="Fairlamb A.H."/>
            <person name="Fraunholz M.J."/>
            <person name="Roos D.S."/>
            <person name="Ralph S.A."/>
            <person name="McFadden G.I."/>
            <person name="Cummings L.M."/>
            <person name="Subramanian G.M."/>
            <person name="Mungall C."/>
            <person name="Venter J.C."/>
            <person name="Carucci D.J."/>
            <person name="Hoffman S.L."/>
            <person name="Newbold C."/>
            <person name="Davis R.W."/>
            <person name="Fraser C.M."/>
            <person name="Barrell B.G."/>
        </authorList>
    </citation>
    <scope>NUCLEOTIDE SEQUENCE [LARGE SCALE GENOMIC DNA]</scope>
    <source>
        <strain evidence="9">3D7</strain>
    </source>
</reference>
<reference evidence="9" key="3">
    <citation type="journal article" date="2002" name="Nature">
        <title>Sequence of Plasmodium falciparum chromosomes 1, 3-9 and 13.</title>
        <authorList>
            <person name="Hall N."/>
            <person name="Pain A."/>
            <person name="Berriman M."/>
            <person name="Churcher C.M."/>
            <person name="Harris B."/>
            <person name="Harris D."/>
            <person name="Mungall K.L."/>
            <person name="Bowman S."/>
            <person name="Atkin R."/>
            <person name="Baker S."/>
            <person name="Barron A."/>
            <person name="Brooks K."/>
            <person name="Buckee C.O."/>
            <person name="Burrows C."/>
            <person name="Cherevach I."/>
            <person name="Chillingworth C."/>
            <person name="Chillingworth T."/>
            <person name="Christodoulou Z."/>
            <person name="Clark L."/>
            <person name="Clark R."/>
            <person name="Corton C."/>
            <person name="Cronin A."/>
            <person name="Davies R.M."/>
            <person name="Davis P."/>
            <person name="Dear P."/>
            <person name="Dearden F."/>
            <person name="Doggett J."/>
            <person name="Feltwell T."/>
            <person name="Goble A."/>
            <person name="Goodhead I."/>
            <person name="Gwilliam R."/>
            <person name="Hamlin N."/>
            <person name="Hance Z."/>
            <person name="Harper D."/>
            <person name="Hauser H."/>
            <person name="Hornsby T."/>
            <person name="Holroyd S."/>
            <person name="Horrocks P."/>
            <person name="Humphray S."/>
            <person name="Jagels K."/>
            <person name="James K.D."/>
            <person name="Johnson D."/>
            <person name="Kerhornou A."/>
            <person name="Knights A."/>
            <person name="Konfortov B."/>
            <person name="Kyes S."/>
            <person name="Larke N."/>
            <person name="Lawson D."/>
            <person name="Lennard N."/>
            <person name="Line A."/>
            <person name="Maddison M."/>
            <person name="Mclean J."/>
            <person name="Mooney P."/>
            <person name="Moule S."/>
            <person name="Murphy L."/>
            <person name="Oliver K."/>
            <person name="Ormond D."/>
            <person name="Price C."/>
            <person name="Quail M.A."/>
            <person name="Rabbinowitsch E."/>
            <person name="Rajandream M.A."/>
            <person name="Rutter S."/>
            <person name="Rutherford K.M."/>
            <person name="Sanders M."/>
            <person name="Simmonds M."/>
            <person name="Seeger K."/>
            <person name="Sharp S."/>
            <person name="Smith R."/>
            <person name="Squares R."/>
            <person name="Squares S."/>
            <person name="Stevens K."/>
            <person name="Taylor K."/>
            <person name="Tivey A."/>
            <person name="Unwin L."/>
            <person name="Whitehead S."/>
            <person name="Woodward J.R."/>
            <person name="Sulston J.E."/>
            <person name="Craig A."/>
            <person name="Newbold C."/>
            <person name="Barrell B.G."/>
        </authorList>
    </citation>
    <scope>NUCLEOTIDE SEQUENCE [LARGE SCALE GENOMIC DNA]</scope>
    <source>
        <strain evidence="9">3D7</strain>
    </source>
</reference>
<reference evidence="5" key="4">
    <citation type="journal article" date="2005" name="FEBS Lett.">
        <title>Reconstitution of an apicoplast-localised electron transfer pathway involved in the isoprenoid biosynthesis of Plasmodium falciparum.</title>
        <authorList>
            <person name="Roehrich R.C."/>
            <person name="Englert N."/>
            <person name="Troschke K."/>
            <person name="Reichenberg A."/>
            <person name="Hintz M."/>
            <person name="Seeber F."/>
            <person name="Balconi E."/>
            <person name="Aliverti A."/>
            <person name="Zanetti G."/>
            <person name="Koehler U."/>
            <person name="Pfeiffer M."/>
            <person name="Beck E."/>
            <person name="Jomaa H."/>
            <person name="Wiesner J."/>
        </authorList>
    </citation>
    <scope>FUNCTION</scope>
    <scope>CATALYTIC ACTIVITY</scope>
    <scope>BIOPHYSICOCHEMICAL PROPERTIES</scope>
    <scope>PATHWAY</scope>
    <scope>INTERACTION WITH FD</scope>
</reference>
<reference evidence="10" key="5">
    <citation type="journal article" date="2013" name="FEBS Lett.">
        <title>Structure of the (E)-4-hydroxy-3-methyl-but-2-enyl-diphosphate reductase from Plasmodium falciparum.</title>
        <authorList>
            <person name="Rekittke I."/>
            <person name="Olkhova E."/>
            <person name="Wiesner J."/>
            <person name="Demmer U."/>
            <person name="Warkentin E."/>
            <person name="Jomaa H."/>
            <person name="Ermler U."/>
        </authorList>
    </citation>
    <scope>X-RAY CRYSTALLOGRAPHY (2.20 ANGSTROMS) IN COMPLEX WITH IRON-SULFUR (3FE-4S)</scope>
</reference>
<name>ISPH_PLAF7</name>
<accession>Q8I295</accession>
<accession>Q9BJX6</accession>
<dbReference type="EC" id="1.17.7.4" evidence="2"/>
<dbReference type="EMBL" id="AF323927">
    <property type="protein sequence ID" value="AAK12102.1"/>
    <property type="molecule type" value="Genomic_DNA"/>
</dbReference>
<dbReference type="EMBL" id="AL844501">
    <property type="protein sequence ID" value="CAD49005.1"/>
    <property type="molecule type" value="Genomic_DNA"/>
</dbReference>
<dbReference type="RefSeq" id="XP_001350977.1">
    <property type="nucleotide sequence ID" value="XM_001350941.1"/>
</dbReference>
<dbReference type="PDB" id="4N7B">
    <property type="method" value="X-ray"/>
    <property type="resolution" value="2.20 A"/>
    <property type="chains" value="A=1-535"/>
</dbReference>
<dbReference type="PDBsum" id="4N7B"/>
<dbReference type="SMR" id="Q8I295"/>
<dbReference type="FunCoup" id="Q8I295">
    <property type="interactions" value="9"/>
</dbReference>
<dbReference type="STRING" id="36329.Q8I295"/>
<dbReference type="PaxDb" id="5833-PFA0225w"/>
<dbReference type="EnsemblProtists" id="CAD49005">
    <property type="protein sequence ID" value="CAD49005"/>
    <property type="gene ID" value="PF3D7_0104400"/>
</dbReference>
<dbReference type="GeneID" id="813182"/>
<dbReference type="KEGG" id="pfa:PF3D7_0104400"/>
<dbReference type="VEuPathDB" id="PlasmoDB:PF3D7_0104400"/>
<dbReference type="VEuPathDB" id="PlasmoDB:Pf7G8_010008600"/>
<dbReference type="VEuPathDB" id="PlasmoDB:PfCD01_010008900"/>
<dbReference type="VEuPathDB" id="PlasmoDB:PfDd2_010008200"/>
<dbReference type="VEuPathDB" id="PlasmoDB:PfGA01_010008800"/>
<dbReference type="VEuPathDB" id="PlasmoDB:PfGB4_010008700"/>
<dbReference type="VEuPathDB" id="PlasmoDB:PfGN01_010008900"/>
<dbReference type="VEuPathDB" id="PlasmoDB:PfHB3_010008600"/>
<dbReference type="VEuPathDB" id="PlasmoDB:PfIT_010007900"/>
<dbReference type="VEuPathDB" id="PlasmoDB:PfKE01_010007700"/>
<dbReference type="VEuPathDB" id="PlasmoDB:PfKH01_010009600"/>
<dbReference type="VEuPathDB" id="PlasmoDB:PfKH02_010008300"/>
<dbReference type="VEuPathDB" id="PlasmoDB:PfML01_010008400"/>
<dbReference type="VEuPathDB" id="PlasmoDB:PfSD01_010008100"/>
<dbReference type="VEuPathDB" id="PlasmoDB:PfSN01_010007300"/>
<dbReference type="VEuPathDB" id="PlasmoDB:PfTG01_010009500"/>
<dbReference type="HOGENOM" id="CLU_038222_0_0_1"/>
<dbReference type="InParanoid" id="Q8I295"/>
<dbReference type="OrthoDB" id="1698201at2759"/>
<dbReference type="PhylomeDB" id="Q8I295"/>
<dbReference type="BRENDA" id="1.17.7.4">
    <property type="organism ID" value="4889"/>
</dbReference>
<dbReference type="UniPathway" id="UPA00056">
    <property type="reaction ID" value="UER00097"/>
</dbReference>
<dbReference type="UniPathway" id="UPA00059">
    <property type="reaction ID" value="UER00105"/>
</dbReference>
<dbReference type="EvolutionaryTrace" id="Q8I295"/>
<dbReference type="Proteomes" id="UP000001450">
    <property type="component" value="Chromosome 1"/>
</dbReference>
<dbReference type="GO" id="GO:0020011">
    <property type="term" value="C:apicoplast"/>
    <property type="evidence" value="ECO:0000314"/>
    <property type="project" value="GeneDB"/>
</dbReference>
<dbReference type="GO" id="GO:0051539">
    <property type="term" value="F:4 iron, 4 sulfur cluster binding"/>
    <property type="evidence" value="ECO:0007669"/>
    <property type="project" value="UniProtKB-KW"/>
</dbReference>
<dbReference type="GO" id="GO:0051745">
    <property type="term" value="F:4-hydroxy-3-methylbut-2-enyl diphosphate reductase activity"/>
    <property type="evidence" value="ECO:0000314"/>
    <property type="project" value="GeneDB"/>
</dbReference>
<dbReference type="GO" id="GO:0046872">
    <property type="term" value="F:metal ion binding"/>
    <property type="evidence" value="ECO:0007669"/>
    <property type="project" value="UniProtKB-KW"/>
</dbReference>
<dbReference type="GO" id="GO:0050992">
    <property type="term" value="P:dimethylallyl diphosphate biosynthetic process"/>
    <property type="evidence" value="ECO:0007669"/>
    <property type="project" value="UniProtKB-UniPathway"/>
</dbReference>
<dbReference type="GO" id="GO:0019288">
    <property type="term" value="P:isopentenyl diphosphate biosynthetic process, methylerythritol 4-phosphate pathway"/>
    <property type="evidence" value="ECO:0000314"/>
    <property type="project" value="GeneDB"/>
</dbReference>
<dbReference type="GO" id="GO:0010322">
    <property type="term" value="P:regulation of isopentenyl diphosphate biosynthetic process, methylerythritol 4-phosphate pathway"/>
    <property type="evidence" value="ECO:0000314"/>
    <property type="project" value="UniProtKB"/>
</dbReference>
<dbReference type="CDD" id="cd13944">
    <property type="entry name" value="lytB_ispH"/>
    <property type="match status" value="1"/>
</dbReference>
<dbReference type="FunFam" id="3.40.1010.20:FF:000003">
    <property type="entry name" value="4-hydroxy-3-methylbut-2-enyl diphosphate reductase"/>
    <property type="match status" value="1"/>
</dbReference>
<dbReference type="FunFam" id="3.40.50.11270:FF:000001">
    <property type="entry name" value="4-hydroxy-3-methylbut-2-enyl diphosphate reductase"/>
    <property type="match status" value="1"/>
</dbReference>
<dbReference type="Gene3D" id="3.40.50.11270">
    <property type="match status" value="1"/>
</dbReference>
<dbReference type="Gene3D" id="3.40.1010.20">
    <property type="entry name" value="4-hydroxy-3-methylbut-2-enyl diphosphate reductase, catalytic domain"/>
    <property type="match status" value="2"/>
</dbReference>
<dbReference type="HAMAP" id="MF_00191">
    <property type="entry name" value="IspH"/>
    <property type="match status" value="1"/>
</dbReference>
<dbReference type="InterPro" id="IPR003451">
    <property type="entry name" value="LytB/IspH"/>
</dbReference>
<dbReference type="NCBIfam" id="TIGR00216">
    <property type="entry name" value="ispH_lytB"/>
    <property type="match status" value="1"/>
</dbReference>
<dbReference type="PANTHER" id="PTHR30426">
    <property type="entry name" value="4-HYDROXY-3-METHYLBUT-2-ENYL DIPHOSPHATE REDUCTASE"/>
    <property type="match status" value="1"/>
</dbReference>
<dbReference type="PANTHER" id="PTHR30426:SF0">
    <property type="entry name" value="4-HYDROXY-3-METHYLBUT-2-ENYL DIPHOSPHATE REDUCTASE"/>
    <property type="match status" value="1"/>
</dbReference>
<dbReference type="Pfam" id="PF02401">
    <property type="entry name" value="LYTB"/>
    <property type="match status" value="1"/>
</dbReference>
<sequence>MSVTTFCSLKKTDKCNIYISKRAFSVFLFYLFFFLFFHFYFLCSSSFAVIIHESEKRKNIMRRKRSILQIFENSIKSKEGKCNFTKRYITHYYNIPLKIKKHDLPSVIKYFSHKPNGKHNYVTNMITQKNRKSFLFFFFLYNKYFFGKQEQIRKMNYHEEMNKINIKNDGNRKIYMYPKNDIHEEDGDHKNDVEINQKRNEQNCKSFNDEKNENARDPNKILYLINPRGFCKGVSRAIETVEECLKLFKPPIYVKHKIVHNDIVCKKLEKEGAIFIEDLNDVPDGHILIYSAHGISPQIREIAKKKKLIEIDATCPLVNKVHVYVQMKAKENYDIILIGYKNHVEVIGTYNEAPHCTHIVENVNDVDKLNFPLNKKLFYVTQTTLSMDDCALIVQKLKNKFPHIETIPSGSICYATTNRQTALNKICTKCDLTIVVGSSSSSNAKKLVYSSQIRNVPAVLLNTVHDLDQQILKNVNKIALTSAASTPEQETQKFVNLLTNPPFNYTLQNFDGAHENVPKWKLPKNLLHMIKEREK</sequence>
<proteinExistence type="evidence at protein level"/>
<comment type="function">
    <text evidence="2">Catalyzes the conversion of 1-hydroxy-2-methyl-2-(E)-butenyl 4-diphosphate (HMBPP) into a mixture of isopentenyl diphosphate (IPP) and dimethylallyl diphosphate (DMAPP). Acts in the terminal step of the DOXP/MEP pathway for isoprenoid precursor biosynthesis.</text>
</comment>
<comment type="catalytic activity">
    <reaction evidence="2">
        <text>dimethylallyl diphosphate + 2 oxidized [2Fe-2S]-[ferredoxin] + H2O = (2E)-4-hydroxy-3-methylbut-2-enyl diphosphate + 2 reduced [2Fe-2S]-[ferredoxin] + 2 H(+)</text>
        <dbReference type="Rhea" id="RHEA:24825"/>
        <dbReference type="Rhea" id="RHEA-COMP:10000"/>
        <dbReference type="Rhea" id="RHEA-COMP:10001"/>
        <dbReference type="ChEBI" id="CHEBI:15377"/>
        <dbReference type="ChEBI" id="CHEBI:15378"/>
        <dbReference type="ChEBI" id="CHEBI:33737"/>
        <dbReference type="ChEBI" id="CHEBI:33738"/>
        <dbReference type="ChEBI" id="CHEBI:57623"/>
        <dbReference type="ChEBI" id="CHEBI:128753"/>
        <dbReference type="EC" id="1.17.7.4"/>
    </reaction>
</comment>
<comment type="catalytic activity">
    <reaction evidence="2">
        <text>isopentenyl diphosphate + 2 oxidized [2Fe-2S]-[ferredoxin] + H2O = (2E)-4-hydroxy-3-methylbut-2-enyl diphosphate + 2 reduced [2Fe-2S]-[ferredoxin] + 2 H(+)</text>
        <dbReference type="Rhea" id="RHEA:24488"/>
        <dbReference type="Rhea" id="RHEA-COMP:10000"/>
        <dbReference type="Rhea" id="RHEA-COMP:10001"/>
        <dbReference type="ChEBI" id="CHEBI:15377"/>
        <dbReference type="ChEBI" id="CHEBI:15378"/>
        <dbReference type="ChEBI" id="CHEBI:33737"/>
        <dbReference type="ChEBI" id="CHEBI:33738"/>
        <dbReference type="ChEBI" id="CHEBI:128753"/>
        <dbReference type="ChEBI" id="CHEBI:128769"/>
        <dbReference type="EC" id="1.17.7.4"/>
    </reaction>
</comment>
<comment type="cofactor">
    <cofactor evidence="3">
        <name>[4Fe-4S] cluster</name>
        <dbReference type="ChEBI" id="CHEBI:49883"/>
    </cofactor>
    <text evidence="3 6">Was shown to bind 1 [3Fe-4S] cluster (PubMed:24188825). However, it initially contains a [4Fe-4S] cluster which easily degrades into a [3Fe-4S] form in the presence of oxygen (Probable).</text>
</comment>
<comment type="biophysicochemical properties">
    <kinetics>
        <KM evidence="2">39 uM for (2E)-4-hydroxy-3-methylbut-2-enyl diphosphate (HMBPP) (with methyl viologen as electron donor and at 30 degrees Celsius)</KM>
        <Vmax evidence="2">2.1 umol/min/mg enzyme for (2E)-4-hydroxy-3-methylbut-2-enyl diphosphate (HMBPP) (with methyl viologen as electron donor and at 30 degrees Celsius)</Vmax>
        <text evidence="2">kcat is 1.3 sec(-1) for (2E)-4-hydroxy-3-methylbut-2-enyl diphosphate (HMBPP) (with methyl viologen as electron donor and at 30 degrees Celsius).</text>
    </kinetics>
    <temperatureDependence>
        <text evidence="2">Optimum temperature is 50 degrees Celsius.</text>
    </temperatureDependence>
</comment>
<comment type="pathway">
    <text evidence="2">Isoprenoid biosynthesis; dimethylallyl diphosphate biosynthesis; dimethylallyl diphosphate from (2E)-4-hydroxy-3-methylbutenyl diphosphate: step 1/1.</text>
</comment>
<comment type="pathway">
    <text evidence="2">Isoprenoid biosynthesis; isopentenyl diphosphate biosynthesis via DXP pathway; isopentenyl diphosphate from 1-deoxy-D-xylulose 5-phosphate: step 6/6.</text>
</comment>
<comment type="subunit">
    <text evidence="2">Interacts with Fd/ferredoxin.</text>
</comment>
<comment type="subcellular location">
    <subcellularLocation>
        <location evidence="5">Plastid</location>
        <location evidence="5">Apicoplast</location>
    </subcellularLocation>
</comment>
<comment type="similarity">
    <text evidence="5">Belongs to the IspH family.</text>
</comment>
<protein>
    <recommendedName>
        <fullName evidence="4">4-hydroxy-3-methylbut-2-enyl diphosphate reductase, apicoplast</fullName>
        <shortName evidence="4">HMBPP reductase</shortName>
        <ecNumber evidence="2">1.17.7.4</ecNumber>
    </recommendedName>
</protein>
<organism evidence="9">
    <name type="scientific">Plasmodium falciparum (isolate 3D7)</name>
    <dbReference type="NCBI Taxonomy" id="36329"/>
    <lineage>
        <taxon>Eukaryota</taxon>
        <taxon>Sar</taxon>
        <taxon>Alveolata</taxon>
        <taxon>Apicomplexa</taxon>
        <taxon>Aconoidasida</taxon>
        <taxon>Haemosporida</taxon>
        <taxon>Plasmodiidae</taxon>
        <taxon>Plasmodium</taxon>
        <taxon>Plasmodium (Laverania)</taxon>
    </lineage>
</organism>
<keyword id="KW-0002">3D-structure</keyword>
<keyword id="KW-0004">4Fe-4S</keyword>
<keyword id="KW-0933">Apicoplast</keyword>
<keyword id="KW-0408">Iron</keyword>
<keyword id="KW-0411">Iron-sulfur</keyword>
<keyword id="KW-0414">Isoprene biosynthesis</keyword>
<keyword id="KW-0479">Metal-binding</keyword>
<keyword id="KW-0560">Oxidoreductase</keyword>
<keyword id="KW-0934">Plastid</keyword>
<keyword id="KW-1185">Reference proteome</keyword>
<keyword id="KW-0809">Transit peptide</keyword>
<gene>
    <name evidence="4" type="primary">LytB</name>
    <name evidence="4" type="synonym">IspH</name>
    <name evidence="8" type="ORF">PF3D7_0104400</name>
</gene>